<dbReference type="EMBL" id="CP000507">
    <property type="protein sequence ID" value="ABM00343.1"/>
    <property type="molecule type" value="Genomic_DNA"/>
</dbReference>
<dbReference type="RefSeq" id="WP_011760250.1">
    <property type="nucleotide sequence ID" value="NC_008700.1"/>
</dbReference>
<dbReference type="STRING" id="326297.Sama_2137"/>
<dbReference type="KEGG" id="saz:Sama_2137"/>
<dbReference type="eggNOG" id="COG2917">
    <property type="taxonomic scope" value="Bacteria"/>
</dbReference>
<dbReference type="HOGENOM" id="CLU_089554_2_0_6"/>
<dbReference type="OrthoDB" id="9788219at2"/>
<dbReference type="Proteomes" id="UP000009175">
    <property type="component" value="Chromosome"/>
</dbReference>
<dbReference type="GO" id="GO:0005886">
    <property type="term" value="C:plasma membrane"/>
    <property type="evidence" value="ECO:0007669"/>
    <property type="project" value="UniProtKB-SubCell"/>
</dbReference>
<dbReference type="HAMAP" id="MF_00189">
    <property type="entry name" value="YciB"/>
    <property type="match status" value="1"/>
</dbReference>
<dbReference type="InterPro" id="IPR006008">
    <property type="entry name" value="YciB"/>
</dbReference>
<dbReference type="NCBIfam" id="TIGR00997">
    <property type="entry name" value="ispZ"/>
    <property type="match status" value="1"/>
</dbReference>
<dbReference type="NCBIfam" id="NF001324">
    <property type="entry name" value="PRK00259.1-2"/>
    <property type="match status" value="1"/>
</dbReference>
<dbReference type="NCBIfam" id="NF001325">
    <property type="entry name" value="PRK00259.1-3"/>
    <property type="match status" value="1"/>
</dbReference>
<dbReference type="PANTHER" id="PTHR36917:SF1">
    <property type="entry name" value="INNER MEMBRANE-SPANNING PROTEIN YCIB"/>
    <property type="match status" value="1"/>
</dbReference>
<dbReference type="PANTHER" id="PTHR36917">
    <property type="entry name" value="INTRACELLULAR SEPTATION PROTEIN A-RELATED"/>
    <property type="match status" value="1"/>
</dbReference>
<dbReference type="Pfam" id="PF04279">
    <property type="entry name" value="IspA"/>
    <property type="match status" value="1"/>
</dbReference>
<protein>
    <recommendedName>
        <fullName evidence="1">Inner membrane-spanning protein YciB</fullName>
    </recommendedName>
</protein>
<accession>A1S7I6</accession>
<name>YCIB_SHEAM</name>
<gene>
    <name evidence="1" type="primary">yciB</name>
    <name type="ordered locus">Sama_2137</name>
</gene>
<reference key="1">
    <citation type="submission" date="2006-12" db="EMBL/GenBank/DDBJ databases">
        <title>Complete sequence of Shewanella amazonensis SB2B.</title>
        <authorList>
            <consortium name="US DOE Joint Genome Institute"/>
            <person name="Copeland A."/>
            <person name="Lucas S."/>
            <person name="Lapidus A."/>
            <person name="Barry K."/>
            <person name="Detter J.C."/>
            <person name="Glavina del Rio T."/>
            <person name="Hammon N."/>
            <person name="Israni S."/>
            <person name="Dalin E."/>
            <person name="Tice H."/>
            <person name="Pitluck S."/>
            <person name="Munk A.C."/>
            <person name="Brettin T."/>
            <person name="Bruce D."/>
            <person name="Han C."/>
            <person name="Tapia R."/>
            <person name="Gilna P."/>
            <person name="Schmutz J."/>
            <person name="Larimer F."/>
            <person name="Land M."/>
            <person name="Hauser L."/>
            <person name="Kyrpides N."/>
            <person name="Mikhailova N."/>
            <person name="Fredrickson J."/>
            <person name="Richardson P."/>
        </authorList>
    </citation>
    <scope>NUCLEOTIDE SEQUENCE [LARGE SCALE GENOMIC DNA]</scope>
    <source>
        <strain>ATCC BAA-1098 / SB2B</strain>
    </source>
</reference>
<proteinExistence type="inferred from homology"/>
<comment type="function">
    <text evidence="1">Plays a role in cell envelope biogenesis, maintenance of cell envelope integrity and membrane homeostasis.</text>
</comment>
<comment type="subcellular location">
    <subcellularLocation>
        <location evidence="1">Cell inner membrane</location>
        <topology evidence="1">Multi-pass membrane protein</topology>
    </subcellularLocation>
</comment>
<comment type="similarity">
    <text evidence="1">Belongs to the YciB family.</text>
</comment>
<evidence type="ECO:0000255" key="1">
    <source>
        <dbReference type="HAMAP-Rule" id="MF_00189"/>
    </source>
</evidence>
<sequence length="181" mass="20662">MKQLLDFLPLLVFFAVYKFFDIYAATGALIVATLIQLIATYALYKKIEKMHLITFALVASFGTATLIFHDDAFIKWKVTIVYALFAIALIAGQFLGKPILKSMLGQEMPVDDKIWARLTWYWVLFFVACGLINIYVAFSLSQETWVNFKVFGLTAATLVNTLLTVVYLFKHLPEDKKKELK</sequence>
<organism>
    <name type="scientific">Shewanella amazonensis (strain ATCC BAA-1098 / SB2B)</name>
    <dbReference type="NCBI Taxonomy" id="326297"/>
    <lineage>
        <taxon>Bacteria</taxon>
        <taxon>Pseudomonadati</taxon>
        <taxon>Pseudomonadota</taxon>
        <taxon>Gammaproteobacteria</taxon>
        <taxon>Alteromonadales</taxon>
        <taxon>Shewanellaceae</taxon>
        <taxon>Shewanella</taxon>
    </lineage>
</organism>
<keyword id="KW-0997">Cell inner membrane</keyword>
<keyword id="KW-1003">Cell membrane</keyword>
<keyword id="KW-0472">Membrane</keyword>
<keyword id="KW-1185">Reference proteome</keyword>
<keyword id="KW-0812">Transmembrane</keyword>
<keyword id="KW-1133">Transmembrane helix</keyword>
<feature type="chain" id="PRO_1000021055" description="Inner membrane-spanning protein YciB">
    <location>
        <begin position="1"/>
        <end position="181"/>
    </location>
</feature>
<feature type="transmembrane region" description="Helical" evidence="1">
    <location>
        <begin position="19"/>
        <end position="39"/>
    </location>
</feature>
<feature type="transmembrane region" description="Helical" evidence="1">
    <location>
        <begin position="50"/>
        <end position="70"/>
    </location>
</feature>
<feature type="transmembrane region" description="Helical" evidence="1">
    <location>
        <begin position="80"/>
        <end position="100"/>
    </location>
</feature>
<feature type="transmembrane region" description="Helical" evidence="1">
    <location>
        <begin position="118"/>
        <end position="138"/>
    </location>
</feature>
<feature type="transmembrane region" description="Helical" evidence="1">
    <location>
        <begin position="148"/>
        <end position="168"/>
    </location>
</feature>